<feature type="chain" id="PRO_0000382286" description="Glutamate-1-semialdehyde 2,1-aminomutase">
    <location>
        <begin position="1"/>
        <end position="427"/>
    </location>
</feature>
<feature type="modified residue" description="N6-(pyridoxal phosphate)lysine" evidence="1">
    <location>
        <position position="265"/>
    </location>
</feature>
<protein>
    <recommendedName>
        <fullName evidence="1">Glutamate-1-semialdehyde 2,1-aminomutase</fullName>
        <shortName evidence="1">GSA</shortName>
        <ecNumber evidence="1">5.4.3.8</ecNumber>
    </recommendedName>
    <alternativeName>
        <fullName evidence="1">Glutamate-1-semialdehyde aminotransferase</fullName>
        <shortName evidence="1">GSA-AT</shortName>
    </alternativeName>
</protein>
<evidence type="ECO:0000255" key="1">
    <source>
        <dbReference type="HAMAP-Rule" id="MF_00375"/>
    </source>
</evidence>
<evidence type="ECO:0000305" key="2"/>
<reference key="1">
    <citation type="journal article" date="2010" name="Genome Biol. Evol.">
        <title>Continuing evolution of Burkholderia mallei through genome reduction and large-scale rearrangements.</title>
        <authorList>
            <person name="Losada L."/>
            <person name="Ronning C.M."/>
            <person name="DeShazer D."/>
            <person name="Woods D."/>
            <person name="Fedorova N."/>
            <person name="Kim H.S."/>
            <person name="Shabalina S.A."/>
            <person name="Pearson T.R."/>
            <person name="Brinkac L."/>
            <person name="Tan P."/>
            <person name="Nandi T."/>
            <person name="Crabtree J."/>
            <person name="Badger J."/>
            <person name="Beckstrom-Sternberg S."/>
            <person name="Saqib M."/>
            <person name="Schutzer S.E."/>
            <person name="Keim P."/>
            <person name="Nierman W.C."/>
        </authorList>
    </citation>
    <scope>NUCLEOTIDE SEQUENCE [LARGE SCALE GENOMIC DNA]</scope>
    <source>
        <strain>NCTC 10247</strain>
    </source>
</reference>
<comment type="catalytic activity">
    <reaction evidence="1">
        <text>(S)-4-amino-5-oxopentanoate = 5-aminolevulinate</text>
        <dbReference type="Rhea" id="RHEA:14265"/>
        <dbReference type="ChEBI" id="CHEBI:57501"/>
        <dbReference type="ChEBI" id="CHEBI:356416"/>
        <dbReference type="EC" id="5.4.3.8"/>
    </reaction>
</comment>
<comment type="cofactor">
    <cofactor evidence="1">
        <name>pyridoxal 5'-phosphate</name>
        <dbReference type="ChEBI" id="CHEBI:597326"/>
    </cofactor>
</comment>
<comment type="pathway">
    <text evidence="1">Porphyrin-containing compound metabolism; protoporphyrin-IX biosynthesis; 5-aminolevulinate from L-glutamyl-tRNA(Glu): step 2/2.</text>
</comment>
<comment type="subunit">
    <text evidence="1">Homodimer.</text>
</comment>
<comment type="subcellular location">
    <subcellularLocation>
        <location evidence="1">Cytoplasm</location>
    </subcellularLocation>
</comment>
<comment type="similarity">
    <text evidence="1">Belongs to the class-III pyridoxal-phosphate-dependent aminotransferase family. HemL subfamily.</text>
</comment>
<comment type="sequence caution" evidence="2">
    <conflict type="erroneous initiation">
        <sequence resource="EMBL-CDS" id="ABO04549"/>
    </conflict>
</comment>
<dbReference type="EC" id="5.4.3.8" evidence="1"/>
<dbReference type="EMBL" id="CP000548">
    <property type="protein sequence ID" value="ABO04549.1"/>
    <property type="status" value="ALT_INIT"/>
    <property type="molecule type" value="Genomic_DNA"/>
</dbReference>
<dbReference type="SMR" id="A3MMQ8"/>
<dbReference type="KEGG" id="bmaz:BM44_1209"/>
<dbReference type="KEGG" id="bmn:BMA10247_2012"/>
<dbReference type="PATRIC" id="fig|320389.8.peg.1351"/>
<dbReference type="UniPathway" id="UPA00251">
    <property type="reaction ID" value="UER00317"/>
</dbReference>
<dbReference type="GO" id="GO:0005737">
    <property type="term" value="C:cytoplasm"/>
    <property type="evidence" value="ECO:0007669"/>
    <property type="project" value="UniProtKB-SubCell"/>
</dbReference>
<dbReference type="GO" id="GO:0042286">
    <property type="term" value="F:glutamate-1-semialdehyde 2,1-aminomutase activity"/>
    <property type="evidence" value="ECO:0007669"/>
    <property type="project" value="UniProtKB-UniRule"/>
</dbReference>
<dbReference type="GO" id="GO:0030170">
    <property type="term" value="F:pyridoxal phosphate binding"/>
    <property type="evidence" value="ECO:0007669"/>
    <property type="project" value="InterPro"/>
</dbReference>
<dbReference type="GO" id="GO:0008483">
    <property type="term" value="F:transaminase activity"/>
    <property type="evidence" value="ECO:0007669"/>
    <property type="project" value="InterPro"/>
</dbReference>
<dbReference type="GO" id="GO:0006782">
    <property type="term" value="P:protoporphyrinogen IX biosynthetic process"/>
    <property type="evidence" value="ECO:0007669"/>
    <property type="project" value="UniProtKB-UniRule"/>
</dbReference>
<dbReference type="CDD" id="cd00610">
    <property type="entry name" value="OAT_like"/>
    <property type="match status" value="1"/>
</dbReference>
<dbReference type="FunFam" id="3.40.640.10:FF:000021">
    <property type="entry name" value="Glutamate-1-semialdehyde 2,1-aminomutase"/>
    <property type="match status" value="1"/>
</dbReference>
<dbReference type="Gene3D" id="3.90.1150.10">
    <property type="entry name" value="Aspartate Aminotransferase, domain 1"/>
    <property type="match status" value="1"/>
</dbReference>
<dbReference type="Gene3D" id="3.40.640.10">
    <property type="entry name" value="Type I PLP-dependent aspartate aminotransferase-like (Major domain)"/>
    <property type="match status" value="1"/>
</dbReference>
<dbReference type="HAMAP" id="MF_00375">
    <property type="entry name" value="HemL_aminotrans_3"/>
    <property type="match status" value="1"/>
</dbReference>
<dbReference type="InterPro" id="IPR004639">
    <property type="entry name" value="4pyrrol_synth_GluAld_NH2Trfase"/>
</dbReference>
<dbReference type="InterPro" id="IPR005814">
    <property type="entry name" value="Aminotrans_3"/>
</dbReference>
<dbReference type="InterPro" id="IPR049704">
    <property type="entry name" value="Aminotrans_3_PPA_site"/>
</dbReference>
<dbReference type="InterPro" id="IPR015424">
    <property type="entry name" value="PyrdxlP-dep_Trfase"/>
</dbReference>
<dbReference type="InterPro" id="IPR015421">
    <property type="entry name" value="PyrdxlP-dep_Trfase_major"/>
</dbReference>
<dbReference type="InterPro" id="IPR015422">
    <property type="entry name" value="PyrdxlP-dep_Trfase_small"/>
</dbReference>
<dbReference type="NCBIfam" id="TIGR00713">
    <property type="entry name" value="hemL"/>
    <property type="match status" value="1"/>
</dbReference>
<dbReference type="NCBIfam" id="NF000818">
    <property type="entry name" value="PRK00062.1"/>
    <property type="match status" value="1"/>
</dbReference>
<dbReference type="PANTHER" id="PTHR43713">
    <property type="entry name" value="GLUTAMATE-1-SEMIALDEHYDE 2,1-AMINOMUTASE"/>
    <property type="match status" value="1"/>
</dbReference>
<dbReference type="PANTHER" id="PTHR43713:SF3">
    <property type="entry name" value="GLUTAMATE-1-SEMIALDEHYDE 2,1-AMINOMUTASE 1, CHLOROPLASTIC-RELATED"/>
    <property type="match status" value="1"/>
</dbReference>
<dbReference type="Pfam" id="PF00202">
    <property type="entry name" value="Aminotran_3"/>
    <property type="match status" value="1"/>
</dbReference>
<dbReference type="SUPFAM" id="SSF53383">
    <property type="entry name" value="PLP-dependent transferases"/>
    <property type="match status" value="1"/>
</dbReference>
<dbReference type="PROSITE" id="PS00600">
    <property type="entry name" value="AA_TRANSFER_CLASS_3"/>
    <property type="match status" value="1"/>
</dbReference>
<sequence>MSNNQTLFERAQRTIPGGVNSPVRAFRSVGGTPRFVARAQGAYFWDADGKRYIDYIGSWGPMIVGHVHPDVLAAVQRVLADGFSFGAPTEAEIEIAEEICKLVPSIEQVRMVSSGTEATMSALRLARGFTGRSRIVKFEGCYHGHADSLLVKAGSGLLTFGNPTSAGVPADVAKHTTVLEYNNVAALEEAFAAFGGEIAAVIVEPVAGNMNLVRGTPEFLNALRALTAKHGAVLIFDEVMCGFRVALGGAQQHYGITPDLTCLGKVIGGGMPAAAFGGRGDIMSHLAPLGGVYQAGTLSGNPVAVAAGLATLRLIQAPGFHDALADKTRRLADGLAAEARAAGVPFSADAIGGMFGLYFTEQVPASFADVTKSDIERFNRFFHLMLDAGVYFAPSAYEAGFVSSAHDDATLDATLDAARRAFAALRA</sequence>
<gene>
    <name evidence="1" type="primary">hemL</name>
    <name type="ordered locus">BMA10247_2012</name>
</gene>
<name>GSA_BURM7</name>
<organism>
    <name type="scientific">Burkholderia mallei (strain NCTC 10247)</name>
    <dbReference type="NCBI Taxonomy" id="320389"/>
    <lineage>
        <taxon>Bacteria</taxon>
        <taxon>Pseudomonadati</taxon>
        <taxon>Pseudomonadota</taxon>
        <taxon>Betaproteobacteria</taxon>
        <taxon>Burkholderiales</taxon>
        <taxon>Burkholderiaceae</taxon>
        <taxon>Burkholderia</taxon>
        <taxon>pseudomallei group</taxon>
    </lineage>
</organism>
<keyword id="KW-0963">Cytoplasm</keyword>
<keyword id="KW-0413">Isomerase</keyword>
<keyword id="KW-0627">Porphyrin biosynthesis</keyword>
<keyword id="KW-0663">Pyridoxal phosphate</keyword>
<proteinExistence type="inferred from homology"/>
<accession>A3MMQ8</accession>